<sequence length="176" mass="19885">MSSNQQPVVLGKLGSCHGIKGWLKITAYTDSVEGIFDYSPWLIKENGEWREVKVIQWRYQGKAVVAELEGVTTRERAQMLTNCEIGILPQQMNALPEDEFYWRDLIGCEVINTTGYNMGIVDQIVETGSNDVLLVKANAKDSFGKVERMVPFVPGQFILKVDVQGKQILVDWDPDF</sequence>
<comment type="function">
    <text evidence="1">An accessory protein needed during the final step in the assembly of 30S ribosomal subunit, possibly for assembly of the head region. Essential for efficient processing of 16S rRNA. May be needed both before and after RbfA during the maturation of 16S rRNA. It has affinity for free ribosomal 30S subunits but not for 70S ribosomes.</text>
</comment>
<comment type="subunit">
    <text evidence="1">Binds ribosomal protein uS19.</text>
</comment>
<comment type="subcellular location">
    <subcellularLocation>
        <location evidence="1">Cytoplasm</location>
    </subcellularLocation>
</comment>
<comment type="domain">
    <text evidence="1">The PRC barrel domain binds ribosomal protein uS19.</text>
</comment>
<comment type="similarity">
    <text evidence="1">Belongs to the RimM family.</text>
</comment>
<feature type="chain" id="PRO_0000163348" description="Ribosome maturation factor RimM">
    <location>
        <begin position="1"/>
        <end position="176"/>
    </location>
</feature>
<feature type="domain" description="PRC barrel" evidence="1">
    <location>
        <begin position="97"/>
        <end position="176"/>
    </location>
</feature>
<proteinExistence type="inferred from homology"/>
<name>RIMM_SHEON</name>
<dbReference type="EMBL" id="AE014299">
    <property type="protein sequence ID" value="AAN54423.2"/>
    <property type="molecule type" value="Genomic_DNA"/>
</dbReference>
<dbReference type="RefSeq" id="NP_716978.2">
    <property type="nucleotide sequence ID" value="NC_004347.2"/>
</dbReference>
<dbReference type="RefSeq" id="WP_011071567.1">
    <property type="nucleotide sequence ID" value="NC_004347.2"/>
</dbReference>
<dbReference type="SMR" id="Q8EH71"/>
<dbReference type="STRING" id="211586.SO_1358"/>
<dbReference type="PaxDb" id="211586-SO_1358"/>
<dbReference type="KEGG" id="son:SO_1358"/>
<dbReference type="PATRIC" id="fig|211586.12.peg.1307"/>
<dbReference type="eggNOG" id="COG0806">
    <property type="taxonomic scope" value="Bacteria"/>
</dbReference>
<dbReference type="HOGENOM" id="CLU_077636_1_0_6"/>
<dbReference type="OrthoDB" id="9783509at2"/>
<dbReference type="PhylomeDB" id="Q8EH71"/>
<dbReference type="BioCyc" id="SONE211586:G1GMP-1256-MONOMER"/>
<dbReference type="Proteomes" id="UP000008186">
    <property type="component" value="Chromosome"/>
</dbReference>
<dbReference type="GO" id="GO:0005829">
    <property type="term" value="C:cytosol"/>
    <property type="evidence" value="ECO:0000318"/>
    <property type="project" value="GO_Central"/>
</dbReference>
<dbReference type="GO" id="GO:0005840">
    <property type="term" value="C:ribosome"/>
    <property type="evidence" value="ECO:0007669"/>
    <property type="project" value="InterPro"/>
</dbReference>
<dbReference type="GO" id="GO:0043022">
    <property type="term" value="F:ribosome binding"/>
    <property type="evidence" value="ECO:0007669"/>
    <property type="project" value="InterPro"/>
</dbReference>
<dbReference type="GO" id="GO:0030490">
    <property type="term" value="P:maturation of SSU-rRNA"/>
    <property type="evidence" value="ECO:0000318"/>
    <property type="project" value="GO_Central"/>
</dbReference>
<dbReference type="Gene3D" id="2.30.30.240">
    <property type="entry name" value="PRC-barrel domain"/>
    <property type="match status" value="1"/>
</dbReference>
<dbReference type="Gene3D" id="2.40.30.60">
    <property type="entry name" value="RimM"/>
    <property type="match status" value="1"/>
</dbReference>
<dbReference type="HAMAP" id="MF_00014">
    <property type="entry name" value="Ribosome_mat_RimM"/>
    <property type="match status" value="1"/>
</dbReference>
<dbReference type="InterPro" id="IPR011033">
    <property type="entry name" value="PRC_barrel-like_sf"/>
</dbReference>
<dbReference type="InterPro" id="IPR056792">
    <property type="entry name" value="PRC_RimM"/>
</dbReference>
<dbReference type="InterPro" id="IPR011961">
    <property type="entry name" value="RimM"/>
</dbReference>
<dbReference type="InterPro" id="IPR002676">
    <property type="entry name" value="RimM_N"/>
</dbReference>
<dbReference type="InterPro" id="IPR036976">
    <property type="entry name" value="RimM_N_sf"/>
</dbReference>
<dbReference type="InterPro" id="IPR009000">
    <property type="entry name" value="Transl_B-barrel_sf"/>
</dbReference>
<dbReference type="NCBIfam" id="TIGR02273">
    <property type="entry name" value="16S_RimM"/>
    <property type="match status" value="1"/>
</dbReference>
<dbReference type="PANTHER" id="PTHR33692">
    <property type="entry name" value="RIBOSOME MATURATION FACTOR RIMM"/>
    <property type="match status" value="1"/>
</dbReference>
<dbReference type="PANTHER" id="PTHR33692:SF1">
    <property type="entry name" value="RIBOSOME MATURATION FACTOR RIMM"/>
    <property type="match status" value="1"/>
</dbReference>
<dbReference type="Pfam" id="PF24986">
    <property type="entry name" value="PRC_RimM"/>
    <property type="match status" value="1"/>
</dbReference>
<dbReference type="Pfam" id="PF01782">
    <property type="entry name" value="RimM"/>
    <property type="match status" value="1"/>
</dbReference>
<dbReference type="SUPFAM" id="SSF50346">
    <property type="entry name" value="PRC-barrel domain"/>
    <property type="match status" value="1"/>
</dbReference>
<dbReference type="SUPFAM" id="SSF50447">
    <property type="entry name" value="Translation proteins"/>
    <property type="match status" value="1"/>
</dbReference>
<keyword id="KW-0143">Chaperone</keyword>
<keyword id="KW-0963">Cytoplasm</keyword>
<keyword id="KW-1185">Reference proteome</keyword>
<keyword id="KW-0690">Ribosome biogenesis</keyword>
<keyword id="KW-0698">rRNA processing</keyword>
<evidence type="ECO:0000255" key="1">
    <source>
        <dbReference type="HAMAP-Rule" id="MF_00014"/>
    </source>
</evidence>
<reference key="1">
    <citation type="journal article" date="2002" name="Nat. Biotechnol.">
        <title>Genome sequence of the dissimilatory metal ion-reducing bacterium Shewanella oneidensis.</title>
        <authorList>
            <person name="Heidelberg J.F."/>
            <person name="Paulsen I.T."/>
            <person name="Nelson K.E."/>
            <person name="Gaidos E.J."/>
            <person name="Nelson W.C."/>
            <person name="Read T.D."/>
            <person name="Eisen J.A."/>
            <person name="Seshadri R."/>
            <person name="Ward N.L."/>
            <person name="Methe B.A."/>
            <person name="Clayton R.A."/>
            <person name="Meyer T."/>
            <person name="Tsapin A."/>
            <person name="Scott J."/>
            <person name="Beanan M.J."/>
            <person name="Brinkac L.M."/>
            <person name="Daugherty S.C."/>
            <person name="DeBoy R.T."/>
            <person name="Dodson R.J."/>
            <person name="Durkin A.S."/>
            <person name="Haft D.H."/>
            <person name="Kolonay J.F."/>
            <person name="Madupu R."/>
            <person name="Peterson J.D."/>
            <person name="Umayam L.A."/>
            <person name="White O."/>
            <person name="Wolf A.M."/>
            <person name="Vamathevan J.J."/>
            <person name="Weidman J.F."/>
            <person name="Impraim M."/>
            <person name="Lee K."/>
            <person name="Berry K.J."/>
            <person name="Lee C."/>
            <person name="Mueller J."/>
            <person name="Khouri H.M."/>
            <person name="Gill J."/>
            <person name="Utterback T.R."/>
            <person name="McDonald L.A."/>
            <person name="Feldblyum T.V."/>
            <person name="Smith H.O."/>
            <person name="Venter J.C."/>
            <person name="Nealson K.H."/>
            <person name="Fraser C.M."/>
        </authorList>
    </citation>
    <scope>NUCLEOTIDE SEQUENCE [LARGE SCALE GENOMIC DNA]</scope>
    <source>
        <strain>ATCC 700550 / JCM 31522 / CIP 106686 / LMG 19005 / NCIMB 14063 / MR-1</strain>
    </source>
</reference>
<organism>
    <name type="scientific">Shewanella oneidensis (strain ATCC 700550 / JCM 31522 / CIP 106686 / LMG 19005 / NCIMB 14063 / MR-1)</name>
    <dbReference type="NCBI Taxonomy" id="211586"/>
    <lineage>
        <taxon>Bacteria</taxon>
        <taxon>Pseudomonadati</taxon>
        <taxon>Pseudomonadota</taxon>
        <taxon>Gammaproteobacteria</taxon>
        <taxon>Alteromonadales</taxon>
        <taxon>Shewanellaceae</taxon>
        <taxon>Shewanella</taxon>
    </lineage>
</organism>
<accession>Q8EH71</accession>
<gene>
    <name evidence="1" type="primary">rimM</name>
    <name type="ordered locus">SO_1358</name>
</gene>
<protein>
    <recommendedName>
        <fullName evidence="1">Ribosome maturation factor RimM</fullName>
    </recommendedName>
</protein>